<accession>Q007T1</accession>
<dbReference type="EMBL" id="DQ915497">
    <property type="protein sequence ID" value="ABJ09402.1"/>
    <property type="molecule type" value="mRNA"/>
</dbReference>
<dbReference type="RefSeq" id="NP_001072149.1">
    <property type="nucleotide sequence ID" value="NM_001078681.1"/>
</dbReference>
<dbReference type="SMR" id="Q007T1"/>
<dbReference type="FunCoup" id="Q007T1">
    <property type="interactions" value="25"/>
</dbReference>
<dbReference type="STRING" id="9823.ENSSSCP00000010635"/>
<dbReference type="PaxDb" id="9823-ENSSSCP00000010635"/>
<dbReference type="PeptideAtlas" id="Q007T1"/>
<dbReference type="Ensembl" id="ENSSSCT00000010920.5">
    <property type="protein sequence ID" value="ENSSSCP00000010635.2"/>
    <property type="gene ID" value="ENSSSCG00000009964.5"/>
</dbReference>
<dbReference type="Ensembl" id="ENSSSCT00015027140.1">
    <property type="protein sequence ID" value="ENSSSCP00015010622.1"/>
    <property type="gene ID" value="ENSSSCG00015020430.1"/>
</dbReference>
<dbReference type="Ensembl" id="ENSSSCT00025060751.1">
    <property type="protein sequence ID" value="ENSSSCP00025025774.1"/>
    <property type="gene ID" value="ENSSSCG00025044723.1"/>
</dbReference>
<dbReference type="Ensembl" id="ENSSSCT00030050507.1">
    <property type="protein sequence ID" value="ENSSSCP00030022960.1"/>
    <property type="gene ID" value="ENSSSCG00030036323.1"/>
</dbReference>
<dbReference type="Ensembl" id="ENSSSCT00035044650.1">
    <property type="protein sequence ID" value="ENSSSCP00035017864.1"/>
    <property type="gene ID" value="ENSSSCG00035033700.1"/>
</dbReference>
<dbReference type="Ensembl" id="ENSSSCT00040021823.1">
    <property type="protein sequence ID" value="ENSSSCP00040009111.1"/>
    <property type="gene ID" value="ENSSSCG00040016225.1"/>
</dbReference>
<dbReference type="Ensembl" id="ENSSSCT00045027577.1">
    <property type="protein sequence ID" value="ENSSSCP00045019073.1"/>
    <property type="gene ID" value="ENSSSCG00045016207.1"/>
</dbReference>
<dbReference type="Ensembl" id="ENSSSCT00050008713.1">
    <property type="protein sequence ID" value="ENSSSCP00050003740.1"/>
    <property type="gene ID" value="ENSSSCG00050006375.1"/>
</dbReference>
<dbReference type="Ensembl" id="ENSSSCT00055044482.1">
    <property type="protein sequence ID" value="ENSSSCP00055035448.1"/>
    <property type="gene ID" value="ENSSSCG00055022632.1"/>
</dbReference>
<dbReference type="Ensembl" id="ENSSSCT00060076312.1">
    <property type="protein sequence ID" value="ENSSSCP00060032982.1"/>
    <property type="gene ID" value="ENSSSCG00060056006.1"/>
</dbReference>
<dbReference type="Ensembl" id="ENSSSCT00065021169.1">
    <property type="protein sequence ID" value="ENSSSCP00065008558.1"/>
    <property type="gene ID" value="ENSSSCG00065015968.1"/>
</dbReference>
<dbReference type="Ensembl" id="ENSSSCT00070001689.1">
    <property type="protein sequence ID" value="ENSSSCP00070001431.1"/>
    <property type="gene ID" value="ENSSSCG00070000876.1"/>
</dbReference>
<dbReference type="Ensembl" id="ENSSSCT00090036624">
    <property type="protein sequence ID" value="ENSSSCP00090022802"/>
    <property type="gene ID" value="ENSSSCG00090020662"/>
</dbReference>
<dbReference type="Ensembl" id="ENSSSCT00105070248">
    <property type="protein sequence ID" value="ENSSSCP00105049758"/>
    <property type="gene ID" value="ENSSSCG00105036841"/>
</dbReference>
<dbReference type="Ensembl" id="ENSSSCT00110076336">
    <property type="protein sequence ID" value="ENSSSCP00110053933"/>
    <property type="gene ID" value="ENSSSCG00110039945"/>
</dbReference>
<dbReference type="Ensembl" id="ENSSSCT00115004579">
    <property type="protein sequence ID" value="ENSSSCP00115004227"/>
    <property type="gene ID" value="ENSSSCG00115002759"/>
</dbReference>
<dbReference type="Ensembl" id="ENSSSCT00130071776">
    <property type="protein sequence ID" value="ENSSSCP00130051796"/>
    <property type="gene ID" value="ENSSSCG00130036746"/>
</dbReference>
<dbReference type="GeneID" id="780429"/>
<dbReference type="KEGG" id="ssc:780429"/>
<dbReference type="CTD" id="1414"/>
<dbReference type="VGNC" id="VGNC:87015">
    <property type="gene designation" value="CRYBB1"/>
</dbReference>
<dbReference type="eggNOG" id="ENOG502QTJT">
    <property type="taxonomic scope" value="Eukaryota"/>
</dbReference>
<dbReference type="GeneTree" id="ENSGT00940000160516"/>
<dbReference type="HOGENOM" id="CLU_081883_0_1_1"/>
<dbReference type="InParanoid" id="Q007T1"/>
<dbReference type="OMA" id="RQWHHEG"/>
<dbReference type="OrthoDB" id="5411518at2759"/>
<dbReference type="TreeFam" id="TF331401"/>
<dbReference type="Proteomes" id="UP000008227">
    <property type="component" value="Chromosome 14"/>
</dbReference>
<dbReference type="Proteomes" id="UP000314985">
    <property type="component" value="Chromosome 14"/>
</dbReference>
<dbReference type="Proteomes" id="UP000694570">
    <property type="component" value="Unplaced"/>
</dbReference>
<dbReference type="Proteomes" id="UP000694571">
    <property type="component" value="Unplaced"/>
</dbReference>
<dbReference type="Proteomes" id="UP000694720">
    <property type="component" value="Unplaced"/>
</dbReference>
<dbReference type="Proteomes" id="UP000694722">
    <property type="component" value="Unplaced"/>
</dbReference>
<dbReference type="Proteomes" id="UP000694723">
    <property type="component" value="Unplaced"/>
</dbReference>
<dbReference type="Proteomes" id="UP000694724">
    <property type="component" value="Unplaced"/>
</dbReference>
<dbReference type="Proteomes" id="UP000694725">
    <property type="component" value="Unplaced"/>
</dbReference>
<dbReference type="Proteomes" id="UP000694726">
    <property type="component" value="Unplaced"/>
</dbReference>
<dbReference type="Proteomes" id="UP000694727">
    <property type="component" value="Unplaced"/>
</dbReference>
<dbReference type="Proteomes" id="UP000694728">
    <property type="component" value="Unplaced"/>
</dbReference>
<dbReference type="Bgee" id="ENSSSCG00000009964">
    <property type="expression patterns" value="Expressed in oocyte and 16 other cell types or tissues"/>
</dbReference>
<dbReference type="GO" id="GO:0005212">
    <property type="term" value="F:structural constituent of eye lens"/>
    <property type="evidence" value="ECO:0000318"/>
    <property type="project" value="GO_Central"/>
</dbReference>
<dbReference type="GO" id="GO:0002088">
    <property type="term" value="P:lens development in camera-type eye"/>
    <property type="evidence" value="ECO:0000318"/>
    <property type="project" value="GO_Central"/>
</dbReference>
<dbReference type="GO" id="GO:0007601">
    <property type="term" value="P:visual perception"/>
    <property type="evidence" value="ECO:0000318"/>
    <property type="project" value="GO_Central"/>
</dbReference>
<dbReference type="FunFam" id="2.60.20.10:FF:000005">
    <property type="entry name" value="Crystallin, beta B1"/>
    <property type="match status" value="1"/>
</dbReference>
<dbReference type="FunFam" id="2.60.20.10:FF:000002">
    <property type="entry name" value="Crystallin, beta B2"/>
    <property type="match status" value="1"/>
</dbReference>
<dbReference type="Gene3D" id="2.60.20.10">
    <property type="entry name" value="Crystallins"/>
    <property type="match status" value="2"/>
</dbReference>
<dbReference type="InterPro" id="IPR050252">
    <property type="entry name" value="Beta/Gamma-Crystallin"/>
</dbReference>
<dbReference type="InterPro" id="IPR001064">
    <property type="entry name" value="Beta/gamma_crystallin"/>
</dbReference>
<dbReference type="InterPro" id="IPR011024">
    <property type="entry name" value="G_crystallin-like"/>
</dbReference>
<dbReference type="PANTHER" id="PTHR11818:SF12">
    <property type="entry name" value="BETA-CRYSTALLIN B1"/>
    <property type="match status" value="1"/>
</dbReference>
<dbReference type="PANTHER" id="PTHR11818">
    <property type="entry name" value="BETA/GAMMA CRYSTALLIN"/>
    <property type="match status" value="1"/>
</dbReference>
<dbReference type="Pfam" id="PF00030">
    <property type="entry name" value="Crystall"/>
    <property type="match status" value="2"/>
</dbReference>
<dbReference type="PRINTS" id="PR01367">
    <property type="entry name" value="BGCRYSTALLIN"/>
</dbReference>
<dbReference type="SMART" id="SM00247">
    <property type="entry name" value="XTALbg"/>
    <property type="match status" value="2"/>
</dbReference>
<dbReference type="SUPFAM" id="SSF49695">
    <property type="entry name" value="gamma-Crystallin-like"/>
    <property type="match status" value="1"/>
</dbReference>
<dbReference type="PROSITE" id="PS50915">
    <property type="entry name" value="CRYSTALLIN_BETA_GAMMA"/>
    <property type="match status" value="4"/>
</dbReference>
<keyword id="KW-0007">Acetylation</keyword>
<keyword id="KW-0273">Eye lens protein</keyword>
<keyword id="KW-0488">Methylation</keyword>
<keyword id="KW-1185">Reference proteome</keyword>
<keyword id="KW-0677">Repeat</keyword>
<proteinExistence type="evidence at transcript level"/>
<comment type="function">
    <text evidence="1">Crystallins are the dominant structural components of the vertebrate eye lens.</text>
</comment>
<comment type="subunit">
    <text evidence="1">Homo/heterodimer, or complexes of higher-order. The structure of beta-crystallin oligomers seems to be stabilized through interactions between the N-terminal arms (By similarity).</text>
</comment>
<comment type="domain">
    <text>Has a two-domain beta-structure, folded into four very similar Greek key motifs.</text>
</comment>
<comment type="PTM">
    <text evidence="1">Specific cleavages in the N-terminal arm occur during lens maturation and give rise to truncated forms, leading to impaired oligomerization and protein insolubilization.</text>
</comment>
<comment type="similarity">
    <text evidence="5">Belongs to the beta/gamma-crystallin family.</text>
</comment>
<evidence type="ECO:0000250" key="1"/>
<evidence type="ECO:0000250" key="2">
    <source>
        <dbReference type="UniProtKB" id="P53674"/>
    </source>
</evidence>
<evidence type="ECO:0000255" key="3">
    <source>
        <dbReference type="PROSITE-ProRule" id="PRU00028"/>
    </source>
</evidence>
<evidence type="ECO:0000256" key="4">
    <source>
        <dbReference type="SAM" id="MobiDB-lite"/>
    </source>
</evidence>
<evidence type="ECO:0000305" key="5"/>
<organism>
    <name type="scientific">Sus scrofa</name>
    <name type="common">Pig</name>
    <dbReference type="NCBI Taxonomy" id="9823"/>
    <lineage>
        <taxon>Eukaryota</taxon>
        <taxon>Metazoa</taxon>
        <taxon>Chordata</taxon>
        <taxon>Craniata</taxon>
        <taxon>Vertebrata</taxon>
        <taxon>Euteleostomi</taxon>
        <taxon>Mammalia</taxon>
        <taxon>Eutheria</taxon>
        <taxon>Laurasiatheria</taxon>
        <taxon>Artiodactyla</taxon>
        <taxon>Suina</taxon>
        <taxon>Suidae</taxon>
        <taxon>Sus</taxon>
    </lineage>
</organism>
<feature type="initiator methionine" description="Removed" evidence="2">
    <location>
        <position position="1"/>
    </location>
</feature>
<feature type="chain" id="PRO_0000289660" description="Beta-crystallin B1">
    <location>
        <begin position="2"/>
        <end position="249"/>
    </location>
</feature>
<feature type="domain" description="Beta/gamma crystallin 'Greek key' 1" evidence="3">
    <location>
        <begin position="56"/>
        <end position="95"/>
    </location>
</feature>
<feature type="domain" description="Beta/gamma crystallin 'Greek key' 2" evidence="3">
    <location>
        <begin position="96"/>
        <end position="140"/>
    </location>
</feature>
<feature type="domain" description="Beta/gamma crystallin 'Greek key' 3" evidence="3">
    <location>
        <begin position="146"/>
        <end position="187"/>
    </location>
</feature>
<feature type="domain" description="Beta/gamma crystallin 'Greek key' 4" evidence="3">
    <location>
        <begin position="188"/>
        <end position="230"/>
    </location>
</feature>
<feature type="region of interest" description="Disordered" evidence="4">
    <location>
        <begin position="1"/>
        <end position="49"/>
    </location>
</feature>
<feature type="region of interest" description="N-terminal arm">
    <location>
        <begin position="2"/>
        <end position="55"/>
    </location>
</feature>
<feature type="region of interest" description="Connecting peptide">
    <location>
        <begin position="141"/>
        <end position="145"/>
    </location>
</feature>
<feature type="region of interest" description="C-terminal arm">
    <location>
        <begin position="232"/>
        <end position="249"/>
    </location>
</feature>
<feature type="compositionally biased region" description="Low complexity" evidence="4">
    <location>
        <begin position="34"/>
        <end position="49"/>
    </location>
</feature>
<feature type="modified residue" description="N-acetylserine" evidence="2">
    <location>
        <position position="2"/>
    </location>
</feature>
<name>CRBB1_PIG</name>
<sequence>MSQPAVKASATAAVNPGPDGKGKGAPPPGPAPGSGPAQAPAQPMPAAKGDLPPGSYKLVVFEQENFQGRRVEFSGECLNLGDRGFDRVRSIIVTSGPWVAFEQSNFRGEMFILEKGEYPRWDTWSSSYRSDRLMSFRPIRMDAQEHKLCLFEGANFKGNTMEIQEDDVPSLWVYGFCDRVGSVRVSSGTWVGYQYPGYRGYQYLLEPGDFRHWNDWGAFQPQMQAVRRLRDRQWHREGCFPVLAAEPPK</sequence>
<reference key="1">
    <citation type="submission" date="2006-08" db="EMBL/GenBank/DDBJ databases">
        <authorList>
            <person name="Liu G.Y."/>
        </authorList>
    </citation>
    <scope>NUCLEOTIDE SEQUENCE [LARGE SCALE MRNA]</scope>
</reference>
<gene>
    <name type="primary">CRYBB1</name>
</gene>
<protein>
    <recommendedName>
        <fullName>Beta-crystallin B1</fullName>
    </recommendedName>
    <alternativeName>
        <fullName>Beta-B1 crystallin</fullName>
    </alternativeName>
</protein>